<accession>B1JIK3</accession>
<feature type="chain" id="PRO_0000357283" description="Methylthioribose-1-phosphate isomerase">
    <location>
        <begin position="1"/>
        <end position="346"/>
    </location>
</feature>
<feature type="active site" description="Proton donor" evidence="1">
    <location>
        <position position="233"/>
    </location>
</feature>
<feature type="binding site" evidence="1">
    <location>
        <begin position="54"/>
        <end position="56"/>
    </location>
    <ligand>
        <name>substrate</name>
    </ligand>
</feature>
<feature type="binding site" evidence="1">
    <location>
        <position position="91"/>
    </location>
    <ligand>
        <name>substrate</name>
    </ligand>
</feature>
<feature type="binding site" evidence="1">
    <location>
        <position position="192"/>
    </location>
    <ligand>
        <name>substrate</name>
    </ligand>
</feature>
<feature type="binding site" evidence="1">
    <location>
        <begin position="243"/>
        <end position="244"/>
    </location>
    <ligand>
        <name>substrate</name>
    </ligand>
</feature>
<feature type="site" description="Transition state stabilizer" evidence="1">
    <location>
        <position position="153"/>
    </location>
</feature>
<evidence type="ECO:0000255" key="1">
    <source>
        <dbReference type="HAMAP-Rule" id="MF_01678"/>
    </source>
</evidence>
<evidence type="ECO:0000305" key="2"/>
<reference key="1">
    <citation type="submission" date="2008-02" db="EMBL/GenBank/DDBJ databases">
        <title>Complete sequence of Yersinia pseudotuberculosis YPIII.</title>
        <authorList>
            <consortium name="US DOE Joint Genome Institute"/>
            <person name="Copeland A."/>
            <person name="Lucas S."/>
            <person name="Lapidus A."/>
            <person name="Glavina del Rio T."/>
            <person name="Dalin E."/>
            <person name="Tice H."/>
            <person name="Bruce D."/>
            <person name="Goodwin L."/>
            <person name="Pitluck S."/>
            <person name="Munk A.C."/>
            <person name="Brettin T."/>
            <person name="Detter J.C."/>
            <person name="Han C."/>
            <person name="Tapia R."/>
            <person name="Schmutz J."/>
            <person name="Larimer F."/>
            <person name="Land M."/>
            <person name="Hauser L."/>
            <person name="Challacombe J.F."/>
            <person name="Green L."/>
            <person name="Lindler L.E."/>
            <person name="Nikolich M.P."/>
            <person name="Richardson P."/>
        </authorList>
    </citation>
    <scope>NUCLEOTIDE SEQUENCE [LARGE SCALE GENOMIC DNA]</scope>
    <source>
        <strain>YPIII</strain>
    </source>
</reference>
<name>MTNA_YERPY</name>
<keyword id="KW-0028">Amino-acid biosynthesis</keyword>
<keyword id="KW-0413">Isomerase</keyword>
<keyword id="KW-0486">Methionine biosynthesis</keyword>
<sequence length="346" mass="37114">MQTLNTLDLQTTSLKIVNGQLWILDQQALPQRQEWLLADTVASLIEHIQALRVRGAPLIGLSASLLLALLAERGLSQALLEQALIALRESRPTAVNLMNNLARMQQALLQPNWVTAMAAEALRLVDEDRELCERIAQHGAALVKPGSNLLTHCNTGGLATAGIGTAIGVLLRAHQQGNLRQVWVDETRPLLQGGRLTAWELGELGIPYQLICDSMAASLMAQGQVDAIWVGADRIAANGDVANKIGTYSLAVLAHYHRIPFYVAAPHTTHDPDCPDGAAIPIEQRAASEVTGVSGGFGHCQWAPEDAAVYNPAFDVTPAALISGWVLDSGVITPEQVAAGFFQPHR</sequence>
<gene>
    <name evidence="1" type="primary">mtnA</name>
    <name type="ordered locus">YPK_3318</name>
</gene>
<dbReference type="EC" id="5.3.1.23" evidence="1"/>
<dbReference type="EMBL" id="CP000950">
    <property type="protein sequence ID" value="ACA69587.1"/>
    <property type="molecule type" value="Genomic_DNA"/>
</dbReference>
<dbReference type="RefSeq" id="WP_011906391.1">
    <property type="nucleotide sequence ID" value="NZ_CP009792.1"/>
</dbReference>
<dbReference type="SMR" id="B1JIK3"/>
<dbReference type="KEGG" id="ypy:YPK_3318"/>
<dbReference type="PATRIC" id="fig|502800.11.peg.4053"/>
<dbReference type="UniPathway" id="UPA00904">
    <property type="reaction ID" value="UER00874"/>
</dbReference>
<dbReference type="GO" id="GO:0046523">
    <property type="term" value="F:S-methyl-5-thioribose-1-phosphate isomerase activity"/>
    <property type="evidence" value="ECO:0007669"/>
    <property type="project" value="UniProtKB-UniRule"/>
</dbReference>
<dbReference type="GO" id="GO:0019509">
    <property type="term" value="P:L-methionine salvage from methylthioadenosine"/>
    <property type="evidence" value="ECO:0007669"/>
    <property type="project" value="UniProtKB-UniRule"/>
</dbReference>
<dbReference type="FunFam" id="3.40.50.10470:FF:000006">
    <property type="entry name" value="Methylthioribose-1-phosphate isomerase"/>
    <property type="match status" value="1"/>
</dbReference>
<dbReference type="Gene3D" id="1.20.120.420">
    <property type="entry name" value="translation initiation factor eif-2b, domain 1"/>
    <property type="match status" value="1"/>
</dbReference>
<dbReference type="Gene3D" id="3.40.50.10470">
    <property type="entry name" value="Translation initiation factor eif-2b, domain 2"/>
    <property type="match status" value="1"/>
</dbReference>
<dbReference type="HAMAP" id="MF_01678">
    <property type="entry name" value="Salvage_MtnA"/>
    <property type="match status" value="1"/>
</dbReference>
<dbReference type="InterPro" id="IPR000649">
    <property type="entry name" value="IF-2B-related"/>
</dbReference>
<dbReference type="InterPro" id="IPR005251">
    <property type="entry name" value="IF-M1Pi"/>
</dbReference>
<dbReference type="InterPro" id="IPR042529">
    <property type="entry name" value="IF_2B-like_C"/>
</dbReference>
<dbReference type="InterPro" id="IPR011559">
    <property type="entry name" value="Initiation_fac_2B_a/b/d"/>
</dbReference>
<dbReference type="InterPro" id="IPR027363">
    <property type="entry name" value="M1Pi_N"/>
</dbReference>
<dbReference type="InterPro" id="IPR037171">
    <property type="entry name" value="NagB/RpiA_transferase-like"/>
</dbReference>
<dbReference type="NCBIfam" id="TIGR00524">
    <property type="entry name" value="eIF-2B_rel"/>
    <property type="match status" value="1"/>
</dbReference>
<dbReference type="NCBIfam" id="NF004326">
    <property type="entry name" value="PRK05720.1"/>
    <property type="match status" value="1"/>
</dbReference>
<dbReference type="NCBIfam" id="TIGR00512">
    <property type="entry name" value="salvage_mtnA"/>
    <property type="match status" value="1"/>
</dbReference>
<dbReference type="PANTHER" id="PTHR43475">
    <property type="entry name" value="METHYLTHIORIBOSE-1-PHOSPHATE ISOMERASE"/>
    <property type="match status" value="1"/>
</dbReference>
<dbReference type="PANTHER" id="PTHR43475:SF1">
    <property type="entry name" value="METHYLTHIORIBOSE-1-PHOSPHATE ISOMERASE"/>
    <property type="match status" value="1"/>
</dbReference>
<dbReference type="Pfam" id="PF01008">
    <property type="entry name" value="IF-2B"/>
    <property type="match status" value="1"/>
</dbReference>
<dbReference type="SUPFAM" id="SSF100950">
    <property type="entry name" value="NagB/RpiA/CoA transferase-like"/>
    <property type="match status" value="1"/>
</dbReference>
<organism>
    <name type="scientific">Yersinia pseudotuberculosis serotype O:3 (strain YPIII)</name>
    <dbReference type="NCBI Taxonomy" id="502800"/>
    <lineage>
        <taxon>Bacteria</taxon>
        <taxon>Pseudomonadati</taxon>
        <taxon>Pseudomonadota</taxon>
        <taxon>Gammaproteobacteria</taxon>
        <taxon>Enterobacterales</taxon>
        <taxon>Yersiniaceae</taxon>
        <taxon>Yersinia</taxon>
    </lineage>
</organism>
<protein>
    <recommendedName>
        <fullName evidence="1">Methylthioribose-1-phosphate isomerase</fullName>
        <shortName evidence="1">M1Pi</shortName>
        <shortName evidence="1">MTR-1-P isomerase</shortName>
        <ecNumber evidence="1">5.3.1.23</ecNumber>
    </recommendedName>
    <alternativeName>
        <fullName evidence="1">S-methyl-5-thioribose-1-phosphate isomerase</fullName>
    </alternativeName>
</protein>
<proteinExistence type="inferred from homology"/>
<comment type="function">
    <text evidence="1">Catalyzes the interconversion of methylthioribose-1-phosphate (MTR-1-P) into methylthioribulose-1-phosphate (MTRu-1-P).</text>
</comment>
<comment type="catalytic activity">
    <reaction evidence="1">
        <text>5-(methylsulfanyl)-alpha-D-ribose 1-phosphate = 5-(methylsulfanyl)-D-ribulose 1-phosphate</text>
        <dbReference type="Rhea" id="RHEA:19989"/>
        <dbReference type="ChEBI" id="CHEBI:58533"/>
        <dbReference type="ChEBI" id="CHEBI:58548"/>
        <dbReference type="EC" id="5.3.1.23"/>
    </reaction>
</comment>
<comment type="pathway">
    <text evidence="1">Amino-acid biosynthesis; L-methionine biosynthesis via salvage pathway; L-methionine from S-methyl-5-thio-alpha-D-ribose 1-phosphate: step 1/6.</text>
</comment>
<comment type="similarity">
    <text evidence="2">Belongs to the eIF-2B alpha/beta/delta subunits family. MtnA subfamily.</text>
</comment>